<sequence length="509" mass="54834">MLPALKKGGRPRDALGRFIRHHERLPVSLADTRGVLFVVSEMADFIKAGGLGDVAAALPRALRHRYDVRVLIPGYRAVLERAGKVEIVGRVLAHAALPACDIGRIVQSDGLPIYILLSRELFERDGSPYVSTSGSEFEDNAIRFATLSHAAADIAAGHAGLGWKPRLLHLNDWPCALAAGYVRWSGGTTPCLLTIHNLAYQGLVPYSMAGALGIPAERVAELEFYGQMSFLRGGIVNADHVNTVSVSYAKQITGPAQGCGLDRLLAGRAAKGVLTGIVNGIDASWDPRTDEYLDSHFSVNQWQGRQDNAAQVRKAFGLRESTGPLFAVVSRLVHQKGLDLICEVAPQIVAAGGQIAVIGGGEPDIERQVAELTRRYPGQVGAFIGFEEGLARRMFAGADFLLMPSRFEPCGLSQMYAQRFGCLPIAHATGGLIDTVDDGVTGFLFQHASVEALRRCLERAFRTFRLPGLLAAMRRAAMLRPSGWDVAGNKYLSLYERTAAIAPALATVS</sequence>
<comment type="function">
    <text evidence="1">Synthesizes alpha-1,4-glucan chains using ADP-glucose.</text>
</comment>
<comment type="catalytic activity">
    <reaction evidence="1">
        <text>[(1-&gt;4)-alpha-D-glucosyl](n) + ADP-alpha-D-glucose = [(1-&gt;4)-alpha-D-glucosyl](n+1) + ADP + H(+)</text>
        <dbReference type="Rhea" id="RHEA:18189"/>
        <dbReference type="Rhea" id="RHEA-COMP:9584"/>
        <dbReference type="Rhea" id="RHEA-COMP:9587"/>
        <dbReference type="ChEBI" id="CHEBI:15378"/>
        <dbReference type="ChEBI" id="CHEBI:15444"/>
        <dbReference type="ChEBI" id="CHEBI:57498"/>
        <dbReference type="ChEBI" id="CHEBI:456216"/>
        <dbReference type="EC" id="2.4.1.21"/>
    </reaction>
</comment>
<comment type="pathway">
    <text evidence="1">Glycan biosynthesis; glycogen biosynthesis.</text>
</comment>
<comment type="similarity">
    <text evidence="1">Belongs to the glycosyltransferase 1 family. Bacterial/plant glycogen synthase subfamily.</text>
</comment>
<dbReference type="EC" id="2.4.1.21" evidence="1"/>
<dbReference type="EMBL" id="CP000967">
    <property type="protein sequence ID" value="ACD56777.1"/>
    <property type="molecule type" value="Genomic_DNA"/>
</dbReference>
<dbReference type="SMR" id="B2SVT3"/>
<dbReference type="CAZy" id="GT5">
    <property type="family name" value="Glycosyltransferase Family 5"/>
</dbReference>
<dbReference type="KEGG" id="xop:PXO_03376"/>
<dbReference type="eggNOG" id="COG0297">
    <property type="taxonomic scope" value="Bacteria"/>
</dbReference>
<dbReference type="HOGENOM" id="CLU_009583_18_2_6"/>
<dbReference type="UniPathway" id="UPA00164"/>
<dbReference type="Proteomes" id="UP000001740">
    <property type="component" value="Chromosome"/>
</dbReference>
<dbReference type="GO" id="GO:0009011">
    <property type="term" value="F:alpha-1,4-glucan glucosyltransferase (ADP-glucose donor) activity"/>
    <property type="evidence" value="ECO:0007669"/>
    <property type="project" value="UniProtKB-UniRule"/>
</dbReference>
<dbReference type="GO" id="GO:0004373">
    <property type="term" value="F:alpha-1,4-glucan glucosyltransferase (UDP-glucose donor) activity"/>
    <property type="evidence" value="ECO:0007669"/>
    <property type="project" value="InterPro"/>
</dbReference>
<dbReference type="GO" id="GO:0005978">
    <property type="term" value="P:glycogen biosynthetic process"/>
    <property type="evidence" value="ECO:0007669"/>
    <property type="project" value="UniProtKB-UniRule"/>
</dbReference>
<dbReference type="CDD" id="cd03791">
    <property type="entry name" value="GT5_Glycogen_synthase_DULL1-like"/>
    <property type="match status" value="1"/>
</dbReference>
<dbReference type="Gene3D" id="3.40.50.2000">
    <property type="entry name" value="Glycogen Phosphorylase B"/>
    <property type="match status" value="2"/>
</dbReference>
<dbReference type="HAMAP" id="MF_00484">
    <property type="entry name" value="Glycogen_synth"/>
    <property type="match status" value="1"/>
</dbReference>
<dbReference type="InterPro" id="IPR001296">
    <property type="entry name" value="Glyco_trans_1"/>
</dbReference>
<dbReference type="InterPro" id="IPR011835">
    <property type="entry name" value="GS/SS"/>
</dbReference>
<dbReference type="InterPro" id="IPR013534">
    <property type="entry name" value="Starch_synth_cat_dom"/>
</dbReference>
<dbReference type="NCBIfam" id="TIGR02095">
    <property type="entry name" value="glgA"/>
    <property type="match status" value="1"/>
</dbReference>
<dbReference type="NCBIfam" id="NF001899">
    <property type="entry name" value="PRK00654.1-2"/>
    <property type="match status" value="1"/>
</dbReference>
<dbReference type="NCBIfam" id="NF001901">
    <property type="entry name" value="PRK00654.1-5"/>
    <property type="match status" value="1"/>
</dbReference>
<dbReference type="PANTHER" id="PTHR45825:SF8">
    <property type="entry name" value="GLYCOGEN SYNTHASE"/>
    <property type="match status" value="1"/>
</dbReference>
<dbReference type="PANTHER" id="PTHR45825">
    <property type="entry name" value="GRANULE-BOUND STARCH SYNTHASE 1, CHLOROPLASTIC/AMYLOPLASTIC"/>
    <property type="match status" value="1"/>
</dbReference>
<dbReference type="Pfam" id="PF08323">
    <property type="entry name" value="Glyco_transf_5"/>
    <property type="match status" value="1"/>
</dbReference>
<dbReference type="Pfam" id="PF00534">
    <property type="entry name" value="Glycos_transf_1"/>
    <property type="match status" value="1"/>
</dbReference>
<dbReference type="SUPFAM" id="SSF53756">
    <property type="entry name" value="UDP-Glycosyltransferase/glycogen phosphorylase"/>
    <property type="match status" value="1"/>
</dbReference>
<reference key="1">
    <citation type="journal article" date="2008" name="BMC Genomics">
        <title>Genome sequence and rapid evolution of the rice pathogen Xanthomonas oryzae pv. oryzae PXO99A.</title>
        <authorList>
            <person name="Salzberg S.L."/>
            <person name="Sommer D.D."/>
            <person name="Schatz M.C."/>
            <person name="Phillippy A.M."/>
            <person name="Rabinowicz P.D."/>
            <person name="Tsuge S."/>
            <person name="Furutani A."/>
            <person name="Ochiai H."/>
            <person name="Delcher A.L."/>
            <person name="Kelley D."/>
            <person name="Madupu R."/>
            <person name="Puiu D."/>
            <person name="Radune D."/>
            <person name="Shumway M."/>
            <person name="Trapnell C."/>
            <person name="Aparna G."/>
            <person name="Jha G."/>
            <person name="Pandey A."/>
            <person name="Patil P.B."/>
            <person name="Ishihara H."/>
            <person name="Meyer D.F."/>
            <person name="Szurek B."/>
            <person name="Verdier V."/>
            <person name="Koebnik R."/>
            <person name="Dow J.M."/>
            <person name="Ryan R.P."/>
            <person name="Hirata H."/>
            <person name="Tsuyumu S."/>
            <person name="Won Lee S."/>
            <person name="Seo Y.-S."/>
            <person name="Sriariyanum M."/>
            <person name="Ronald P.C."/>
            <person name="Sonti R.V."/>
            <person name="Van Sluys M.-A."/>
            <person name="Leach J.E."/>
            <person name="White F.F."/>
            <person name="Bogdanove A.J."/>
        </authorList>
    </citation>
    <scope>NUCLEOTIDE SEQUENCE [LARGE SCALE GENOMIC DNA]</scope>
    <source>
        <strain>PXO99A</strain>
    </source>
</reference>
<gene>
    <name evidence="1" type="primary">glgA</name>
    <name type="ordered locus">PXO_03376</name>
</gene>
<organism>
    <name type="scientific">Xanthomonas oryzae pv. oryzae (strain PXO99A)</name>
    <dbReference type="NCBI Taxonomy" id="360094"/>
    <lineage>
        <taxon>Bacteria</taxon>
        <taxon>Pseudomonadati</taxon>
        <taxon>Pseudomonadota</taxon>
        <taxon>Gammaproteobacteria</taxon>
        <taxon>Lysobacterales</taxon>
        <taxon>Lysobacteraceae</taxon>
        <taxon>Xanthomonas</taxon>
    </lineage>
</organism>
<accession>B2SVT3</accession>
<feature type="chain" id="PRO_1000126112" description="Glycogen synthase">
    <location>
        <begin position="1"/>
        <end position="509"/>
    </location>
</feature>
<feature type="binding site" evidence="1">
    <location>
        <position position="47"/>
    </location>
    <ligand>
        <name>ADP-alpha-D-glucose</name>
        <dbReference type="ChEBI" id="CHEBI:57498"/>
    </ligand>
</feature>
<keyword id="KW-0320">Glycogen biosynthesis</keyword>
<keyword id="KW-0328">Glycosyltransferase</keyword>
<keyword id="KW-0808">Transferase</keyword>
<name>GLGA_XANOP</name>
<evidence type="ECO:0000255" key="1">
    <source>
        <dbReference type="HAMAP-Rule" id="MF_00484"/>
    </source>
</evidence>
<proteinExistence type="inferred from homology"/>
<protein>
    <recommendedName>
        <fullName evidence="1">Glycogen synthase</fullName>
        <ecNumber evidence="1">2.4.1.21</ecNumber>
    </recommendedName>
    <alternativeName>
        <fullName evidence="1">Starch [bacterial glycogen] synthase</fullName>
    </alternativeName>
</protein>